<feature type="chain" id="PRO_0000370732" description="Transport inhibitor response 1-like protein Os04g0395600">
    <location>
        <begin position="1"/>
        <end position="575"/>
    </location>
</feature>
<feature type="domain" description="F-box">
    <location>
        <begin position="1"/>
        <end position="45"/>
    </location>
</feature>
<feature type="region of interest" description="Interaction with auxin-responsive proteins" evidence="1">
    <location>
        <begin position="76"/>
        <end position="77"/>
    </location>
</feature>
<feature type="region of interest" description="Interaction with auxin-responsive proteins" evidence="1">
    <location>
        <begin position="343"/>
        <end position="348"/>
    </location>
</feature>
<feature type="region of interest" description="Interaction with auxin-responsive proteins" evidence="1">
    <location>
        <begin position="400"/>
        <end position="404"/>
    </location>
</feature>
<feature type="region of interest" description="Interaction with auxin-responsive proteins" evidence="1">
    <location>
        <begin position="459"/>
        <end position="460"/>
    </location>
</feature>
<feature type="binding site" evidence="1">
    <location>
        <position position="69"/>
    </location>
    <ligand>
        <name>1D-myo-inositol hexakisphosphate</name>
        <dbReference type="ChEBI" id="CHEBI:58130"/>
    </ligand>
</feature>
<feature type="binding site" evidence="1">
    <location>
        <begin position="108"/>
        <end position="109"/>
    </location>
    <ligand>
        <name>1D-myo-inositol hexakisphosphate</name>
        <dbReference type="ChEBI" id="CHEBI:58130"/>
    </ligand>
</feature>
<feature type="binding site" evidence="1">
    <location>
        <position position="340"/>
    </location>
    <ligand>
        <name>1D-myo-inositol hexakisphosphate</name>
        <dbReference type="ChEBI" id="CHEBI:58130"/>
    </ligand>
</feature>
<feature type="binding site" evidence="1">
    <location>
        <begin position="396"/>
        <end position="398"/>
    </location>
    <ligand>
        <name>1D-myo-inositol hexakisphosphate</name>
        <dbReference type="ChEBI" id="CHEBI:58130"/>
    </ligand>
</feature>
<feature type="binding site" evidence="1">
    <location>
        <position position="431"/>
    </location>
    <ligand>
        <name>1D-myo-inositol hexakisphosphate</name>
        <dbReference type="ChEBI" id="CHEBI:58130"/>
    </ligand>
</feature>
<feature type="binding site" evidence="1">
    <location>
        <begin position="479"/>
        <end position="480"/>
    </location>
    <ligand>
        <name>1D-myo-inositol hexakisphosphate</name>
        <dbReference type="ChEBI" id="CHEBI:58130"/>
    </ligand>
</feature>
<feature type="binding site" evidence="1">
    <location>
        <position position="504"/>
    </location>
    <ligand>
        <name>1D-myo-inositol hexakisphosphate</name>
        <dbReference type="ChEBI" id="CHEBI:58130"/>
    </ligand>
</feature>
<feature type="site" description="Interaction with auxin-responsive proteins" evidence="1">
    <location>
        <position position="134"/>
    </location>
</feature>
<feature type="site" description="Interaction with auxin-responsive proteins" evidence="1">
    <location>
        <position position="160"/>
    </location>
</feature>
<feature type="site" description="Interaction with auxin-responsive proteins" evidence="1">
    <location>
        <position position="375"/>
    </location>
</feature>
<feature type="site" description="Interaction with auxin-responsive proteins" evidence="1">
    <location>
        <position position="484"/>
    </location>
</feature>
<comment type="pathway">
    <text>Protein modification; protein ubiquitination.</text>
</comment>
<comment type="subunit">
    <text evidence="1">Part of a SCF (SKP1-cullin-F-box) protein ligase complex. May interact with auxin and auxin-responsive proteins (By similarity).</text>
</comment>
<comment type="subcellular location">
    <subcellularLocation>
        <location evidence="1">Nucleus</location>
    </subcellularLocation>
</comment>
<comment type="domain">
    <text evidence="1">The F-box is necessary for the interaction with SKP1.</text>
</comment>
<comment type="miscellaneous">
    <text evidence="1">The myo-inositol hexakisphosphate acts as a structural cofactor.</text>
</comment>
<proteinExistence type="evidence at transcript level"/>
<organism>
    <name type="scientific">Oryza sativa subsp. japonica</name>
    <name type="common">Rice</name>
    <dbReference type="NCBI Taxonomy" id="39947"/>
    <lineage>
        <taxon>Eukaryota</taxon>
        <taxon>Viridiplantae</taxon>
        <taxon>Streptophyta</taxon>
        <taxon>Embryophyta</taxon>
        <taxon>Tracheophyta</taxon>
        <taxon>Spermatophyta</taxon>
        <taxon>Magnoliopsida</taxon>
        <taxon>Liliopsida</taxon>
        <taxon>Poales</taxon>
        <taxon>Poaceae</taxon>
        <taxon>BOP clade</taxon>
        <taxon>Oryzoideae</taxon>
        <taxon>Oryzeae</taxon>
        <taxon>Oryzinae</taxon>
        <taxon>Oryza</taxon>
        <taxon>Oryza sativa</taxon>
    </lineage>
</organism>
<dbReference type="EMBL" id="AL606621">
    <property type="protein sequence ID" value="CAD40545.1"/>
    <property type="molecule type" value="Genomic_DNA"/>
</dbReference>
<dbReference type="EMBL" id="AP008210">
    <property type="protein sequence ID" value="BAF14573.1"/>
    <property type="molecule type" value="Genomic_DNA"/>
</dbReference>
<dbReference type="EMBL" id="AP014960">
    <property type="protein sequence ID" value="BAS88999.1"/>
    <property type="molecule type" value="Genomic_DNA"/>
</dbReference>
<dbReference type="EMBL" id="CM000141">
    <property type="protein sequence ID" value="EAZ30576.1"/>
    <property type="molecule type" value="Genomic_DNA"/>
</dbReference>
<dbReference type="EMBL" id="AK100862">
    <property type="protein sequence ID" value="BAG94804.1"/>
    <property type="molecule type" value="mRNA"/>
</dbReference>
<dbReference type="RefSeq" id="XP_015635915.1">
    <property type="nucleotide sequence ID" value="XM_015780429.1"/>
</dbReference>
<dbReference type="SMR" id="Q7XVM8"/>
<dbReference type="FunCoup" id="Q7XVM8">
    <property type="interactions" value="108"/>
</dbReference>
<dbReference type="STRING" id="39947.Q7XVM8"/>
<dbReference type="PaxDb" id="39947-Q7XVM8"/>
<dbReference type="EnsemblPlants" id="Os04t0395600-01">
    <property type="protein sequence ID" value="Os04t0395600-01"/>
    <property type="gene ID" value="Os04g0395600"/>
</dbReference>
<dbReference type="EnsemblPlants" id="Os04t0395600-02">
    <property type="protein sequence ID" value="Os04t0395600-02"/>
    <property type="gene ID" value="Os04g0395600"/>
</dbReference>
<dbReference type="Gramene" id="Os04t0395600-01">
    <property type="protein sequence ID" value="Os04t0395600-01"/>
    <property type="gene ID" value="Os04g0395600"/>
</dbReference>
<dbReference type="Gramene" id="Os04t0395600-02">
    <property type="protein sequence ID" value="Os04t0395600-02"/>
    <property type="gene ID" value="Os04g0395600"/>
</dbReference>
<dbReference type="KEGG" id="dosa:Os04g0395600"/>
<dbReference type="eggNOG" id="KOG1947">
    <property type="taxonomic scope" value="Eukaryota"/>
</dbReference>
<dbReference type="HOGENOM" id="CLU_022456_1_0_1"/>
<dbReference type="InParanoid" id="Q7XVM8"/>
<dbReference type="OMA" id="DWGGYVY"/>
<dbReference type="OrthoDB" id="423607at2759"/>
<dbReference type="PlantReactome" id="R-OSA-5608118">
    <property type="pathway name" value="Auxin signalling"/>
</dbReference>
<dbReference type="PlantReactome" id="R-OSA-9608575">
    <property type="pathway name" value="Reproductive meristem phase change"/>
</dbReference>
<dbReference type="UniPathway" id="UPA00143"/>
<dbReference type="Proteomes" id="UP000000763">
    <property type="component" value="Chromosome 4"/>
</dbReference>
<dbReference type="Proteomes" id="UP000007752">
    <property type="component" value="Chromosome 4"/>
</dbReference>
<dbReference type="Proteomes" id="UP000059680">
    <property type="component" value="Chromosome 4"/>
</dbReference>
<dbReference type="ExpressionAtlas" id="Q7XVM8">
    <property type="expression patterns" value="baseline and differential"/>
</dbReference>
<dbReference type="GO" id="GO:0005634">
    <property type="term" value="C:nucleus"/>
    <property type="evidence" value="ECO:0007669"/>
    <property type="project" value="UniProtKB-SubCell"/>
</dbReference>
<dbReference type="GO" id="GO:0019005">
    <property type="term" value="C:SCF ubiquitin ligase complex"/>
    <property type="evidence" value="ECO:0000250"/>
    <property type="project" value="UniProtKB"/>
</dbReference>
<dbReference type="GO" id="GO:0010011">
    <property type="term" value="F:auxin binding"/>
    <property type="evidence" value="ECO:0000250"/>
    <property type="project" value="UniProtKB"/>
</dbReference>
<dbReference type="GO" id="GO:0000822">
    <property type="term" value="F:inositol hexakisphosphate binding"/>
    <property type="evidence" value="ECO:0000250"/>
    <property type="project" value="UniProtKB"/>
</dbReference>
<dbReference type="GO" id="GO:0009734">
    <property type="term" value="P:auxin-activated signaling pathway"/>
    <property type="evidence" value="ECO:0000250"/>
    <property type="project" value="UniProtKB"/>
</dbReference>
<dbReference type="GO" id="GO:0016567">
    <property type="term" value="P:protein ubiquitination"/>
    <property type="evidence" value="ECO:0007669"/>
    <property type="project" value="UniProtKB-UniPathway"/>
</dbReference>
<dbReference type="GO" id="GO:0031146">
    <property type="term" value="P:SCF-dependent proteasomal ubiquitin-dependent protein catabolic process"/>
    <property type="evidence" value="ECO:0000318"/>
    <property type="project" value="GO_Central"/>
</dbReference>
<dbReference type="CDD" id="cd22159">
    <property type="entry name" value="F-box_AtTIR1-like"/>
    <property type="match status" value="1"/>
</dbReference>
<dbReference type="FunFam" id="1.20.1280.50:FF:000006">
    <property type="entry name" value="Transport inhibitor response 1"/>
    <property type="match status" value="1"/>
</dbReference>
<dbReference type="FunFam" id="3.80.10.10:FF:000029">
    <property type="entry name" value="Transport inhibitor response 1"/>
    <property type="match status" value="1"/>
</dbReference>
<dbReference type="Gene3D" id="1.20.1280.50">
    <property type="match status" value="1"/>
</dbReference>
<dbReference type="Gene3D" id="3.80.10.10">
    <property type="entry name" value="Ribonuclease Inhibitor"/>
    <property type="match status" value="1"/>
</dbReference>
<dbReference type="InterPro" id="IPR041567">
    <property type="entry name" value="COI1_F-box"/>
</dbReference>
<dbReference type="InterPro" id="IPR036047">
    <property type="entry name" value="F-box-like_dom_sf"/>
</dbReference>
<dbReference type="InterPro" id="IPR001810">
    <property type="entry name" value="F-box_dom"/>
</dbReference>
<dbReference type="InterPro" id="IPR001611">
    <property type="entry name" value="Leu-rich_rpt"/>
</dbReference>
<dbReference type="InterPro" id="IPR006553">
    <property type="entry name" value="Leu-rich_rpt_Cys-con_subtyp"/>
</dbReference>
<dbReference type="InterPro" id="IPR032675">
    <property type="entry name" value="LRR_dom_sf"/>
</dbReference>
<dbReference type="InterPro" id="IPR041101">
    <property type="entry name" value="Transp_inhibit"/>
</dbReference>
<dbReference type="PANTHER" id="PTHR16134">
    <property type="entry name" value="F-BOX/TPR REPEAT PROTEIN POF3"/>
    <property type="match status" value="1"/>
</dbReference>
<dbReference type="PANTHER" id="PTHR16134:SF45">
    <property type="entry name" value="PROTEIN AUXIN SIGNALING F-BOX 3"/>
    <property type="match status" value="1"/>
</dbReference>
<dbReference type="Pfam" id="PF18511">
    <property type="entry name" value="F-box_5"/>
    <property type="match status" value="1"/>
</dbReference>
<dbReference type="Pfam" id="PF13516">
    <property type="entry name" value="LRR_6"/>
    <property type="match status" value="1"/>
</dbReference>
<dbReference type="Pfam" id="PF18791">
    <property type="entry name" value="Transp_inhibit"/>
    <property type="match status" value="1"/>
</dbReference>
<dbReference type="SMART" id="SM00256">
    <property type="entry name" value="FBOX"/>
    <property type="match status" value="1"/>
</dbReference>
<dbReference type="SMART" id="SM00367">
    <property type="entry name" value="LRR_CC"/>
    <property type="match status" value="6"/>
</dbReference>
<dbReference type="SUPFAM" id="SSF81383">
    <property type="entry name" value="F-box domain"/>
    <property type="match status" value="1"/>
</dbReference>
<dbReference type="SUPFAM" id="SSF52047">
    <property type="entry name" value="RNI-like"/>
    <property type="match status" value="2"/>
</dbReference>
<keyword id="KW-0927">Auxin signaling pathway</keyword>
<keyword id="KW-0539">Nucleus</keyword>
<keyword id="KW-1185">Reference proteome</keyword>
<keyword id="KW-0833">Ubl conjugation pathway</keyword>
<accession>Q7XVM8</accession>
<accession>A0A0P0WA04</accession>
<evidence type="ECO:0000250" key="1"/>
<reference key="1">
    <citation type="journal article" date="2002" name="Nature">
        <title>Sequence and analysis of rice chromosome 4.</title>
        <authorList>
            <person name="Feng Q."/>
            <person name="Zhang Y."/>
            <person name="Hao P."/>
            <person name="Wang S."/>
            <person name="Fu G."/>
            <person name="Huang Y."/>
            <person name="Li Y."/>
            <person name="Zhu J."/>
            <person name="Liu Y."/>
            <person name="Hu X."/>
            <person name="Jia P."/>
            <person name="Zhang Y."/>
            <person name="Zhao Q."/>
            <person name="Ying K."/>
            <person name="Yu S."/>
            <person name="Tang Y."/>
            <person name="Weng Q."/>
            <person name="Zhang L."/>
            <person name="Lu Y."/>
            <person name="Mu J."/>
            <person name="Lu Y."/>
            <person name="Zhang L.S."/>
            <person name="Yu Z."/>
            <person name="Fan D."/>
            <person name="Liu X."/>
            <person name="Lu T."/>
            <person name="Li C."/>
            <person name="Wu Y."/>
            <person name="Sun T."/>
            <person name="Lei H."/>
            <person name="Li T."/>
            <person name="Hu H."/>
            <person name="Guan J."/>
            <person name="Wu M."/>
            <person name="Zhang R."/>
            <person name="Zhou B."/>
            <person name="Chen Z."/>
            <person name="Chen L."/>
            <person name="Jin Z."/>
            <person name="Wang R."/>
            <person name="Yin H."/>
            <person name="Cai Z."/>
            <person name="Ren S."/>
            <person name="Lv G."/>
            <person name="Gu W."/>
            <person name="Zhu G."/>
            <person name="Tu Y."/>
            <person name="Jia J."/>
            <person name="Zhang Y."/>
            <person name="Chen J."/>
            <person name="Kang H."/>
            <person name="Chen X."/>
            <person name="Shao C."/>
            <person name="Sun Y."/>
            <person name="Hu Q."/>
            <person name="Zhang X."/>
            <person name="Zhang W."/>
            <person name="Wang L."/>
            <person name="Ding C."/>
            <person name="Sheng H."/>
            <person name="Gu J."/>
            <person name="Chen S."/>
            <person name="Ni L."/>
            <person name="Zhu F."/>
            <person name="Chen W."/>
            <person name="Lan L."/>
            <person name="Lai Y."/>
            <person name="Cheng Z."/>
            <person name="Gu M."/>
            <person name="Jiang J."/>
            <person name="Li J."/>
            <person name="Hong G."/>
            <person name="Xue Y."/>
            <person name="Han B."/>
        </authorList>
    </citation>
    <scope>NUCLEOTIDE SEQUENCE [LARGE SCALE GENOMIC DNA]</scope>
    <source>
        <strain>cv. Nipponbare</strain>
    </source>
</reference>
<reference key="2">
    <citation type="journal article" date="2005" name="Nature">
        <title>The map-based sequence of the rice genome.</title>
        <authorList>
            <consortium name="International rice genome sequencing project (IRGSP)"/>
        </authorList>
    </citation>
    <scope>NUCLEOTIDE SEQUENCE [LARGE SCALE GENOMIC DNA]</scope>
    <source>
        <strain>cv. Nipponbare</strain>
    </source>
</reference>
<reference key="3">
    <citation type="journal article" date="2008" name="Nucleic Acids Res.">
        <title>The rice annotation project database (RAP-DB): 2008 update.</title>
        <authorList>
            <consortium name="The rice annotation project (RAP)"/>
        </authorList>
    </citation>
    <scope>GENOME REANNOTATION</scope>
    <source>
        <strain>cv. Nipponbare</strain>
    </source>
</reference>
<reference key="4">
    <citation type="journal article" date="2013" name="Rice">
        <title>Improvement of the Oryza sativa Nipponbare reference genome using next generation sequence and optical map data.</title>
        <authorList>
            <person name="Kawahara Y."/>
            <person name="de la Bastide M."/>
            <person name="Hamilton J.P."/>
            <person name="Kanamori H."/>
            <person name="McCombie W.R."/>
            <person name="Ouyang S."/>
            <person name="Schwartz D.C."/>
            <person name="Tanaka T."/>
            <person name="Wu J."/>
            <person name="Zhou S."/>
            <person name="Childs K.L."/>
            <person name="Davidson R.M."/>
            <person name="Lin H."/>
            <person name="Quesada-Ocampo L."/>
            <person name="Vaillancourt B."/>
            <person name="Sakai H."/>
            <person name="Lee S.S."/>
            <person name="Kim J."/>
            <person name="Numa H."/>
            <person name="Itoh T."/>
            <person name="Buell C.R."/>
            <person name="Matsumoto T."/>
        </authorList>
    </citation>
    <scope>GENOME REANNOTATION</scope>
    <source>
        <strain>cv. Nipponbare</strain>
    </source>
</reference>
<reference key="5">
    <citation type="journal article" date="2005" name="PLoS Biol.">
        <title>The genomes of Oryza sativa: a history of duplications.</title>
        <authorList>
            <person name="Yu J."/>
            <person name="Wang J."/>
            <person name="Lin W."/>
            <person name="Li S."/>
            <person name="Li H."/>
            <person name="Zhou J."/>
            <person name="Ni P."/>
            <person name="Dong W."/>
            <person name="Hu S."/>
            <person name="Zeng C."/>
            <person name="Zhang J."/>
            <person name="Zhang Y."/>
            <person name="Li R."/>
            <person name="Xu Z."/>
            <person name="Li S."/>
            <person name="Li X."/>
            <person name="Zheng H."/>
            <person name="Cong L."/>
            <person name="Lin L."/>
            <person name="Yin J."/>
            <person name="Geng J."/>
            <person name="Li G."/>
            <person name="Shi J."/>
            <person name="Liu J."/>
            <person name="Lv H."/>
            <person name="Li J."/>
            <person name="Wang J."/>
            <person name="Deng Y."/>
            <person name="Ran L."/>
            <person name="Shi X."/>
            <person name="Wang X."/>
            <person name="Wu Q."/>
            <person name="Li C."/>
            <person name="Ren X."/>
            <person name="Wang J."/>
            <person name="Wang X."/>
            <person name="Li D."/>
            <person name="Liu D."/>
            <person name="Zhang X."/>
            <person name="Ji Z."/>
            <person name="Zhao W."/>
            <person name="Sun Y."/>
            <person name="Zhang Z."/>
            <person name="Bao J."/>
            <person name="Han Y."/>
            <person name="Dong L."/>
            <person name="Ji J."/>
            <person name="Chen P."/>
            <person name="Wu S."/>
            <person name="Liu J."/>
            <person name="Xiao Y."/>
            <person name="Bu D."/>
            <person name="Tan J."/>
            <person name="Yang L."/>
            <person name="Ye C."/>
            <person name="Zhang J."/>
            <person name="Xu J."/>
            <person name="Zhou Y."/>
            <person name="Yu Y."/>
            <person name="Zhang B."/>
            <person name="Zhuang S."/>
            <person name="Wei H."/>
            <person name="Liu B."/>
            <person name="Lei M."/>
            <person name="Yu H."/>
            <person name="Li Y."/>
            <person name="Xu H."/>
            <person name="Wei S."/>
            <person name="He X."/>
            <person name="Fang L."/>
            <person name="Zhang Z."/>
            <person name="Zhang Y."/>
            <person name="Huang X."/>
            <person name="Su Z."/>
            <person name="Tong W."/>
            <person name="Li J."/>
            <person name="Tong Z."/>
            <person name="Li S."/>
            <person name="Ye J."/>
            <person name="Wang L."/>
            <person name="Fang L."/>
            <person name="Lei T."/>
            <person name="Chen C.-S."/>
            <person name="Chen H.-C."/>
            <person name="Xu Z."/>
            <person name="Li H."/>
            <person name="Huang H."/>
            <person name="Zhang F."/>
            <person name="Xu H."/>
            <person name="Li N."/>
            <person name="Zhao C."/>
            <person name="Li S."/>
            <person name="Dong L."/>
            <person name="Huang Y."/>
            <person name="Li L."/>
            <person name="Xi Y."/>
            <person name="Qi Q."/>
            <person name="Li W."/>
            <person name="Zhang B."/>
            <person name="Hu W."/>
            <person name="Zhang Y."/>
            <person name="Tian X."/>
            <person name="Jiao Y."/>
            <person name="Liang X."/>
            <person name="Jin J."/>
            <person name="Gao L."/>
            <person name="Zheng W."/>
            <person name="Hao B."/>
            <person name="Liu S.-M."/>
            <person name="Wang W."/>
            <person name="Yuan L."/>
            <person name="Cao M."/>
            <person name="McDermott J."/>
            <person name="Samudrala R."/>
            <person name="Wang J."/>
            <person name="Wong G.K.-S."/>
            <person name="Yang H."/>
        </authorList>
    </citation>
    <scope>NUCLEOTIDE SEQUENCE [LARGE SCALE GENOMIC DNA]</scope>
    <source>
        <strain>cv. Nipponbare</strain>
    </source>
</reference>
<reference key="6">
    <citation type="journal article" date="2003" name="Science">
        <title>Collection, mapping, and annotation of over 28,000 cDNA clones from japonica rice.</title>
        <authorList>
            <consortium name="The rice full-length cDNA consortium"/>
        </authorList>
    </citation>
    <scope>NUCLEOTIDE SEQUENCE [LARGE SCALE MRNA]</scope>
    <source>
        <strain>cv. Nipponbare</strain>
    </source>
</reference>
<name>TIR1B_ORYSJ</name>
<sequence length="575" mass="64055">MTYFPEEVVEHIFSFLPAQRDRNTVSLVCKVWYEIERLSRRGVFVGNCYAVRAGRVAARFPNVRALTVKGKPHFADFNLVPPDWGGYAGPWIEAAARGCHGLEELRMKRMVVSDESLELLARSFPRFRALVLISCEGFSTDGLAAVASHCKLLRELDLQENEVEDRGPRWLSCFPDSCTSLVSLNFACIKGEVNAGSLERLVSRSPNLRSLRLNRSVSVDTLAKILLRTPNLEDLGTGNLTDDFQTESYFKLTSALEKCKMLRSLSGFWDASPVCLSFIYPLCAQLTGLNLSYAPTLDASDLTKMISRCVKLQRLWVLDCISDKGLQVVASSCKDLQELRVFPSDFYVAGYSAVTEEGLVAVSLGCPKLNSLLYFCHQMTNAALVTVAKNCPNFTRFRLCILEPGKPDVVTSQPLDEGFGAIVRECKGLQRLSISGLLTDKVFMYIGKYAKQLEMLSIAFAGDSDKGMMHVMNGCKNLRKLEIRDSPFGDAALLGNFARYETMRSLWMSSCNVTLKGCQVLASKMPMLNVEVINERDGSNEMEENHGDLPKVEKLYVYRTTAGARDDAPNFVKIL</sequence>
<gene>
    <name type="ordered locus">Os04g0395600</name>
    <name type="ordered locus">LOC_Os04g32460</name>
    <name type="ORF">OsJ_14626</name>
    <name type="ORF">OSJNBa0072K14.18</name>
</gene>
<protein>
    <recommendedName>
        <fullName>Transport inhibitor response 1-like protein Os04g0395600</fullName>
        <shortName>TIR1-like protein</shortName>
    </recommendedName>
</protein>